<sequence>MYAVIKTGGKQYKVEKGMKLKVEKLPYEVGQTVEFEALMLRKDDGSIEFNKGKVIAEVKAHGRGKKLIVFKYRPKKNYKRWKGHRQPYTEIEIKDILP</sequence>
<dbReference type="EMBL" id="AE000657">
    <property type="protein sequence ID" value="AAC07544.1"/>
    <property type="molecule type" value="Genomic_DNA"/>
</dbReference>
<dbReference type="PIR" id="G70441">
    <property type="entry name" value="G70441"/>
</dbReference>
<dbReference type="RefSeq" id="NP_214126.1">
    <property type="nucleotide sequence ID" value="NC_000918.1"/>
</dbReference>
<dbReference type="RefSeq" id="WP_010881063.1">
    <property type="nucleotide sequence ID" value="NC_000918.1"/>
</dbReference>
<dbReference type="SMR" id="O67560"/>
<dbReference type="FunCoup" id="O67560">
    <property type="interactions" value="485"/>
</dbReference>
<dbReference type="STRING" id="224324.aq_1641a"/>
<dbReference type="EnsemblBacteria" id="AAC07544">
    <property type="protein sequence ID" value="AAC07544"/>
    <property type="gene ID" value="aq_1641a"/>
</dbReference>
<dbReference type="KEGG" id="aae:aq_1641a"/>
<dbReference type="PATRIC" id="fig|224324.8.peg.1266"/>
<dbReference type="eggNOG" id="COG0261">
    <property type="taxonomic scope" value="Bacteria"/>
</dbReference>
<dbReference type="HOGENOM" id="CLU_061463_3_2_0"/>
<dbReference type="InParanoid" id="O67560"/>
<dbReference type="OrthoDB" id="9813334at2"/>
<dbReference type="Proteomes" id="UP000000798">
    <property type="component" value="Chromosome"/>
</dbReference>
<dbReference type="GO" id="GO:0005737">
    <property type="term" value="C:cytoplasm"/>
    <property type="evidence" value="ECO:0007669"/>
    <property type="project" value="UniProtKB-ARBA"/>
</dbReference>
<dbReference type="GO" id="GO:1990904">
    <property type="term" value="C:ribonucleoprotein complex"/>
    <property type="evidence" value="ECO:0007669"/>
    <property type="project" value="UniProtKB-KW"/>
</dbReference>
<dbReference type="GO" id="GO:0005840">
    <property type="term" value="C:ribosome"/>
    <property type="evidence" value="ECO:0007669"/>
    <property type="project" value="UniProtKB-KW"/>
</dbReference>
<dbReference type="GO" id="GO:0019843">
    <property type="term" value="F:rRNA binding"/>
    <property type="evidence" value="ECO:0007669"/>
    <property type="project" value="UniProtKB-UniRule"/>
</dbReference>
<dbReference type="GO" id="GO:0003735">
    <property type="term" value="F:structural constituent of ribosome"/>
    <property type="evidence" value="ECO:0000318"/>
    <property type="project" value="GO_Central"/>
</dbReference>
<dbReference type="GO" id="GO:0006412">
    <property type="term" value="P:translation"/>
    <property type="evidence" value="ECO:0007669"/>
    <property type="project" value="UniProtKB-UniRule"/>
</dbReference>
<dbReference type="HAMAP" id="MF_01363">
    <property type="entry name" value="Ribosomal_bL21"/>
    <property type="match status" value="1"/>
</dbReference>
<dbReference type="InterPro" id="IPR028909">
    <property type="entry name" value="bL21-like"/>
</dbReference>
<dbReference type="InterPro" id="IPR036164">
    <property type="entry name" value="bL21-like_sf"/>
</dbReference>
<dbReference type="InterPro" id="IPR001787">
    <property type="entry name" value="Ribosomal_bL21"/>
</dbReference>
<dbReference type="InterPro" id="IPR018258">
    <property type="entry name" value="Ribosomal_bL21_CS"/>
</dbReference>
<dbReference type="NCBIfam" id="TIGR00061">
    <property type="entry name" value="L21"/>
    <property type="match status" value="1"/>
</dbReference>
<dbReference type="PANTHER" id="PTHR21349">
    <property type="entry name" value="50S RIBOSOMAL PROTEIN L21"/>
    <property type="match status" value="1"/>
</dbReference>
<dbReference type="PANTHER" id="PTHR21349:SF0">
    <property type="entry name" value="LARGE RIBOSOMAL SUBUNIT PROTEIN BL21M"/>
    <property type="match status" value="1"/>
</dbReference>
<dbReference type="Pfam" id="PF00829">
    <property type="entry name" value="Ribosomal_L21p"/>
    <property type="match status" value="1"/>
</dbReference>
<dbReference type="SUPFAM" id="SSF141091">
    <property type="entry name" value="L21p-like"/>
    <property type="match status" value="1"/>
</dbReference>
<dbReference type="PROSITE" id="PS01169">
    <property type="entry name" value="RIBOSOMAL_L21"/>
    <property type="match status" value="1"/>
</dbReference>
<comment type="function">
    <text evidence="1">This protein binds to 23S rRNA in the presence of protein L20.</text>
</comment>
<comment type="subunit">
    <text evidence="1">Part of the 50S ribosomal subunit. Contacts protein L20.</text>
</comment>
<comment type="similarity">
    <text evidence="1">Belongs to the bacterial ribosomal protein bL21 family.</text>
</comment>
<feature type="chain" id="PRO_0000180989" description="Large ribosomal subunit protein bL21">
    <location>
        <begin position="1"/>
        <end position="98"/>
    </location>
</feature>
<reference key="1">
    <citation type="journal article" date="1998" name="Nature">
        <title>The complete genome of the hyperthermophilic bacterium Aquifex aeolicus.</title>
        <authorList>
            <person name="Deckert G."/>
            <person name="Warren P.V."/>
            <person name="Gaasterland T."/>
            <person name="Young W.G."/>
            <person name="Lenox A.L."/>
            <person name="Graham D.E."/>
            <person name="Overbeek R."/>
            <person name="Snead M.A."/>
            <person name="Keller M."/>
            <person name="Aujay M."/>
            <person name="Huber R."/>
            <person name="Feldman R.A."/>
            <person name="Short J.M."/>
            <person name="Olsen G.J."/>
            <person name="Swanson R.V."/>
        </authorList>
    </citation>
    <scope>NUCLEOTIDE SEQUENCE [LARGE SCALE GENOMIC DNA]</scope>
    <source>
        <strain>VF5</strain>
    </source>
</reference>
<evidence type="ECO:0000255" key="1">
    <source>
        <dbReference type="HAMAP-Rule" id="MF_01363"/>
    </source>
</evidence>
<evidence type="ECO:0000305" key="2"/>
<keyword id="KW-1185">Reference proteome</keyword>
<keyword id="KW-0687">Ribonucleoprotein</keyword>
<keyword id="KW-0689">Ribosomal protein</keyword>
<keyword id="KW-0694">RNA-binding</keyword>
<keyword id="KW-0699">rRNA-binding</keyword>
<name>RL21_AQUAE</name>
<proteinExistence type="inferred from homology"/>
<gene>
    <name evidence="1" type="primary">rplU</name>
    <name type="ordered locus">aq_1641.1</name>
    <name type="ORF">aq_1641A</name>
</gene>
<accession>O67560</accession>
<organism>
    <name type="scientific">Aquifex aeolicus (strain VF5)</name>
    <dbReference type="NCBI Taxonomy" id="224324"/>
    <lineage>
        <taxon>Bacteria</taxon>
        <taxon>Pseudomonadati</taxon>
        <taxon>Aquificota</taxon>
        <taxon>Aquificia</taxon>
        <taxon>Aquificales</taxon>
        <taxon>Aquificaceae</taxon>
        <taxon>Aquifex</taxon>
    </lineage>
</organism>
<protein>
    <recommendedName>
        <fullName evidence="1">Large ribosomal subunit protein bL21</fullName>
    </recommendedName>
    <alternativeName>
        <fullName evidence="2">50S ribosomal protein L21</fullName>
    </alternativeName>
</protein>